<name>RPOC2_PLAF7</name>
<keyword id="KW-0933">Apicoplast</keyword>
<keyword id="KW-0240">DNA-directed RNA polymerase</keyword>
<keyword id="KW-0479">Metal-binding</keyword>
<keyword id="KW-0548">Nucleotidyltransferase</keyword>
<keyword id="KW-0934">Plastid</keyword>
<keyword id="KW-1185">Reference proteome</keyword>
<keyword id="KW-0804">Transcription</keyword>
<keyword id="KW-0808">Transferase</keyword>
<keyword id="KW-0862">Zinc</keyword>
<dbReference type="EC" id="2.7.7.6" evidence="2"/>
<dbReference type="EMBL" id="X95275">
    <property type="protein sequence ID" value="CAA64574.1"/>
    <property type="molecule type" value="Genomic_DNA"/>
</dbReference>
<dbReference type="EMBL" id="LR605956">
    <property type="protein sequence ID" value="VWP78959.1"/>
    <property type="status" value="ALT_SEQ"/>
    <property type="molecule type" value="Genomic_DNA"/>
</dbReference>
<dbReference type="PIR" id="S72284">
    <property type="entry name" value="S72284"/>
</dbReference>
<dbReference type="FunCoup" id="Q25802">
    <property type="interactions" value="4"/>
</dbReference>
<dbReference type="STRING" id="36329.Q25802"/>
<dbReference type="InParanoid" id="Q25802"/>
<dbReference type="OrthoDB" id="498011at2759"/>
<dbReference type="Proteomes" id="UP000001450">
    <property type="component" value="Apicoplast API"/>
</dbReference>
<dbReference type="GO" id="GO:0020011">
    <property type="term" value="C:apicoplast"/>
    <property type="evidence" value="ECO:0007669"/>
    <property type="project" value="UniProtKB-SubCell"/>
</dbReference>
<dbReference type="GO" id="GO:0000428">
    <property type="term" value="C:DNA-directed RNA polymerase complex"/>
    <property type="evidence" value="ECO:0007669"/>
    <property type="project" value="UniProtKB-KW"/>
</dbReference>
<dbReference type="GO" id="GO:0005739">
    <property type="term" value="C:mitochondrion"/>
    <property type="evidence" value="ECO:0007669"/>
    <property type="project" value="GOC"/>
</dbReference>
<dbReference type="GO" id="GO:0003677">
    <property type="term" value="F:DNA binding"/>
    <property type="evidence" value="ECO:0007669"/>
    <property type="project" value="InterPro"/>
</dbReference>
<dbReference type="GO" id="GO:0003899">
    <property type="term" value="F:DNA-directed RNA polymerase activity"/>
    <property type="evidence" value="ECO:0007669"/>
    <property type="project" value="UniProtKB-EC"/>
</dbReference>
<dbReference type="GO" id="GO:0046872">
    <property type="term" value="F:metal ion binding"/>
    <property type="evidence" value="ECO:0007669"/>
    <property type="project" value="UniProtKB-KW"/>
</dbReference>
<dbReference type="GO" id="GO:0006351">
    <property type="term" value="P:DNA-templated transcription"/>
    <property type="evidence" value="ECO:0007669"/>
    <property type="project" value="InterPro"/>
</dbReference>
<dbReference type="CDD" id="cd02655">
    <property type="entry name" value="RNAP_beta'_C"/>
    <property type="match status" value="1"/>
</dbReference>
<dbReference type="Gene3D" id="1.10.132.30">
    <property type="match status" value="1"/>
</dbReference>
<dbReference type="Gene3D" id="1.10.150.390">
    <property type="match status" value="1"/>
</dbReference>
<dbReference type="Gene3D" id="1.10.1790.20">
    <property type="match status" value="1"/>
</dbReference>
<dbReference type="InterPro" id="IPR045867">
    <property type="entry name" value="DNA-dir_RpoC_beta_prime"/>
</dbReference>
<dbReference type="InterPro" id="IPR007081">
    <property type="entry name" value="RNA_pol_Rpb1_5"/>
</dbReference>
<dbReference type="InterPro" id="IPR038120">
    <property type="entry name" value="Rpb1_funnel_sf"/>
</dbReference>
<dbReference type="PANTHER" id="PTHR19376">
    <property type="entry name" value="DNA-DIRECTED RNA POLYMERASE"/>
    <property type="match status" value="1"/>
</dbReference>
<dbReference type="PANTHER" id="PTHR19376:SF54">
    <property type="entry name" value="DNA-DIRECTED RNA POLYMERASE SUBUNIT BETA"/>
    <property type="match status" value="1"/>
</dbReference>
<dbReference type="Pfam" id="PF04998">
    <property type="entry name" value="RNA_pol_Rpb1_5"/>
    <property type="match status" value="1"/>
</dbReference>
<dbReference type="SUPFAM" id="SSF64484">
    <property type="entry name" value="beta and beta-prime subunits of DNA dependent RNA-polymerase"/>
    <property type="match status" value="2"/>
</dbReference>
<proteinExistence type="inferred from homology"/>
<organism>
    <name type="scientific">Plasmodium falciparum (isolate 3D7)</name>
    <dbReference type="NCBI Taxonomy" id="36329"/>
    <lineage>
        <taxon>Eukaryota</taxon>
        <taxon>Sar</taxon>
        <taxon>Alveolata</taxon>
        <taxon>Apicomplexa</taxon>
        <taxon>Aconoidasida</taxon>
        <taxon>Haemosporida</taxon>
        <taxon>Plasmodiidae</taxon>
        <taxon>Plasmodium</taxon>
        <taxon>Plasmodium (Laverania)</taxon>
    </lineage>
</organism>
<comment type="function">
    <text evidence="2">DNA-dependent RNA polymerase catalyzes the transcription of DNA into RNA using the four ribonucleoside triphosphates as substrates.</text>
</comment>
<comment type="catalytic activity">
    <reaction evidence="2">
        <text>RNA(n) + a ribonucleoside 5'-triphosphate = RNA(n+1) + diphosphate</text>
        <dbReference type="Rhea" id="RHEA:21248"/>
        <dbReference type="Rhea" id="RHEA-COMP:14527"/>
        <dbReference type="Rhea" id="RHEA-COMP:17342"/>
        <dbReference type="ChEBI" id="CHEBI:33019"/>
        <dbReference type="ChEBI" id="CHEBI:61557"/>
        <dbReference type="ChEBI" id="CHEBI:140395"/>
        <dbReference type="EC" id="2.7.7.6"/>
    </reaction>
</comment>
<comment type="cofactor">
    <cofactor evidence="2">
        <name>Zn(2+)</name>
        <dbReference type="ChEBI" id="CHEBI:29105"/>
    </cofactor>
    <text evidence="2">Binds 1 Zn(2+) ion per subunit.</text>
</comment>
<comment type="subunit">
    <text evidence="1">In plastids the minimal PEP RNA polymerase catalytic core is composed of four subunits: alpha, beta, beta', and beta''. When a (nuclear-encoded) sigma factor is associated with the core the holoenzyme is formed, which can initiate transcription (By similarity).</text>
</comment>
<comment type="subcellular location">
    <subcellularLocation>
        <location evidence="5">Plastid</location>
        <location evidence="5">Apicoplast</location>
    </subcellularLocation>
</comment>
<comment type="similarity">
    <text evidence="4">Belongs to the RNA polymerase beta' chain family. RpoC2 subfamily.</text>
</comment>
<comment type="sequence caution" evidence="4">
    <conflict type="erroneous gene model prediction">
        <sequence resource="EMBL-CDS" id="VWP78959"/>
    </conflict>
</comment>
<evidence type="ECO:0000250" key="1"/>
<evidence type="ECO:0000250" key="2">
    <source>
        <dbReference type="UniProtKB" id="P0A8T7"/>
    </source>
</evidence>
<evidence type="ECO:0000303" key="3">
    <source>
    </source>
</evidence>
<evidence type="ECO:0000305" key="4"/>
<evidence type="ECO:0000305" key="5">
    <source>
    </source>
</evidence>
<evidence type="ECO:0000312" key="6">
    <source>
        <dbReference type="Proteomes" id="UP000001450"/>
    </source>
</evidence>
<feature type="chain" id="PRO_0000344060" description="DNA-directed RNA polymerase subunit beta''">
    <location>
        <begin position="1"/>
        <end position="959"/>
    </location>
</feature>
<feature type="binding site" evidence="2">
    <location>
        <position position="211"/>
    </location>
    <ligand>
        <name>Zn(2+)</name>
        <dbReference type="ChEBI" id="CHEBI:29105"/>
    </ligand>
</feature>
<feature type="binding site" evidence="2">
    <location>
        <position position="288"/>
    </location>
    <ligand>
        <name>Zn(2+)</name>
        <dbReference type="ChEBI" id="CHEBI:29105"/>
    </ligand>
</feature>
<feature type="binding site" evidence="2">
    <location>
        <position position="295"/>
    </location>
    <ligand>
        <name>Zn(2+)</name>
        <dbReference type="ChEBI" id="CHEBI:29105"/>
    </ligand>
</feature>
<feature type="binding site" evidence="2">
    <location>
        <position position="298"/>
    </location>
    <ligand>
        <name>Zn(2+)</name>
        <dbReference type="ChEBI" id="CHEBI:29105"/>
    </ligand>
</feature>
<feature type="sequence conflict" description="In Ref. 1; CAA64574." evidence="4" ref="1">
    <original>K</original>
    <variation>KK</variation>
    <location>
        <position position="524"/>
    </location>
</feature>
<accession>Q25802</accession>
<accession>A0A5K1K9C5</accession>
<gene>
    <name evidence="3" type="primary">rpoC2</name>
    <name type="synonym">rpoD</name>
    <name evidence="4" type="ORF">PF3D7_API04200</name>
</gene>
<protein>
    <recommendedName>
        <fullName>DNA-directed RNA polymerase subunit beta''</fullName>
        <ecNumber evidence="2">2.7.7.6</ecNumber>
    </recommendedName>
    <alternativeName>
        <fullName>PEP</fullName>
    </alternativeName>
    <alternativeName>
        <fullName>Plastid-encoded RNA polymerase subunit beta''</fullName>
        <shortName>RNA polymerase subunit beta''</shortName>
    </alternativeName>
</protein>
<geneLocation type="apicoplast"/>
<sequence>MYFYFFNKYNLKILEKKLLIIFKYNISFKILHELLYLGYEYSFLYNYSLNIKDFSNFIYLLILYKNKINNIYNNKYYEIKNNYINVFLNNYYYLKVINKIQGILNNNLYNKINPIYSNLFLFFNNKIKIKYSQLQQLIGYKGYISNIKGMIYEKPVINNYINELNIYEYILSCYGSKKGIIDTALKTADSGYLTKRLINITSNFIIKELNCKSPFILKYILNMDIYGNIILPLNILRFKILQNNILNLNNGTFIYTKNTYITKYILNKLLNLYNRRNIYLNIKSVYLCNIYNNICNTCLNYKQLYKYNLGQHIGVISSEAISEPSTQMVLRTFHASSILKDKFNFNKYLIYKIYLYKLNINKIFKLIINFKKYINIKFNLIFLMNKILYNYNNILFEYKYILQNQYIKCNFIYNSISKNFKYNLNNIIIKYLNNVIKYYNYSNIQLLIKNIHNKWILYNIYTYYLYYYHIKFYNLYNKGIILNNNNNKYNVIYFLINYFNLFSNYYYKIYNNNYNFINSNYYFKMNFILKNFNNIQILNKLFYVNNIFIYYKYEKKLFIYLNIINNIIIKKYLNFYKYTYNKLFFIKKYNNFLYLYEIFKYNWYKYLLLNNKYNLYIIYNNYIKYLYKYNININLYFIKNLFYNNNNFIHNHIIYKNNYYIYNNNMNLYQYNKNILINNNLLYNKLFYNYINNNIYNLYLNDITIGLQSINIIFENKNIKDNIFFISNNIYVIFYIKYYNYLNNIIYIYNICNKYNINHYKYKLNFYSYIFEDISSILYSGYSLHTEFYSINKNLKYYFRFLLKSINIYQATKSSYIYVYNILIESILKQYSYQNIYLPSIYFELIIKKMLSCIKIISNNFKIFKYNDIISLQLINIINYSLNLNKHYIYKYEPIILGITKSILANSGFLTNISFQNTFKIISLNILNNKIDWLIDIKSKIILTDLLPVGNGWYRYLVN</sequence>
<reference key="1">
    <citation type="journal article" date="1996" name="J. Mol. Biol.">
        <title>Complete gene map of the plastid-like DNA of the malaria parasite Plasmodium falciparum.</title>
        <authorList>
            <person name="Wilson R.J.M."/>
            <person name="Denny P.W."/>
            <person name="Preiser P.R."/>
            <person name="Rangachari K."/>
            <person name="Roberts K."/>
            <person name="Roy A."/>
            <person name="Whyte A."/>
            <person name="Strath M."/>
            <person name="Moore D.J."/>
            <person name="Moore P.W."/>
            <person name="Williamson D.H."/>
        </authorList>
    </citation>
    <scope>NUCLEOTIDE SEQUENCE [LARGE SCALE GENOMIC DNA]</scope>
    <source>
        <strain>BW/C10</strain>
    </source>
</reference>
<reference evidence="6" key="2">
    <citation type="submission" date="2019-06" db="EMBL/GenBank/DDBJ databases">
        <authorList>
            <consortium name="Pathogen Informatics"/>
        </authorList>
    </citation>
    <scope>NUCLEOTIDE SEQUENCE [LARGE SCALE GENOMIC DNA]</scope>
    <source>
        <strain evidence="6">3D7</strain>
    </source>
</reference>
<reference key="3">
    <citation type="journal article" date="2016" name="Protist">
        <title>Transcripts in the Plasmodium Apicoplast Undergo Cleavage at tRNAs and Editing, and Include Antisense Sequences.</title>
        <authorList>
            <person name="Nisbet R.E.R."/>
            <person name="Kurniawan D.P."/>
            <person name="Bowers H.D."/>
            <person name="Howe C.J."/>
        </authorList>
    </citation>
    <scope>IDENTIFICATION</scope>
</reference>